<protein>
    <recommendedName>
        <fullName>Tripartite motif-containing protein 5</fullName>
        <ecNumber>2.3.2.27</ecNumber>
    </recommendedName>
    <alternativeName>
        <fullName evidence="18">RING-type E3 ubiquitin transferase TRIM5</fullName>
    </alternativeName>
    <alternativeName>
        <fullName>TRIM5alpha</fullName>
    </alternativeName>
</protein>
<name>TRIM5_MACMU</name>
<comment type="function">
    <text evidence="10 13 15 16">Capsid-specific restriction factor that prevents infection from non-host-adapted retroviruses. Blocks viral replication early in the life cycle, after viral entry but before reverse transcription. In addition to acting as a capsid-specific restriction factor, also acts as a pattern recognition receptor that activates innate immune signaling in response to the retroviral capsid lattice. Binding to the viral capsid triggers its E3 ubiquitin ligase activity, and in concert with the heterodimeric ubiquitin conjugating enzyme complex UBE2V1-UBE2N (also known as UBC13-UEV1A complex) generates 'Lys-63'-linked polyubiquitin chains, which in turn are catalysts in the autophosphorylation of the MAP3K7/TAK1 complex (includes TAK1, TAB2, and TAB3). Activation of the MAP3K7/TAK1 complex by autophosphorylation results in the induction and expression of NF-kappa-B and MAPK-responsive inflammatory genes, thereby leading to an innate immune response in the infected cell. Restricts infection by human immunodeficiency virus type 1 (HIV-1) and simian immunodeficiency virus (SIV-agm). Plays a role in regulating autophagy through activation of autophagy regulator BECN1 by causing its dissociation from its inhibitors BCL2 and TAB2 (PubMed:25127057). Also plays a role in autophagy by acting as a selective autophagy receptor which recognizes and targets HIV-1 capsid protein p24 for autophagic destruction (PubMed:25127057).</text>
</comment>
<comment type="catalytic activity">
    <reaction>
        <text>S-ubiquitinyl-[E2 ubiquitin-conjugating enzyme]-L-cysteine + [acceptor protein]-L-lysine = [E2 ubiquitin-conjugating enzyme]-L-cysteine + N(6)-ubiquitinyl-[acceptor protein]-L-lysine.</text>
        <dbReference type="EC" id="2.3.2.27"/>
    </reaction>
</comment>
<comment type="pathway">
    <text>Protein modification; protein ubiquitination.</text>
</comment>
<comment type="subunit">
    <text evidence="2 7 8 9 11 12 13 14 16">Can form homodimers and homotrimers. In addition to lower-order dimerization, also exhibits a higher-order multimerization and both low- and high-order multimerizations are essential for its restriction activity. Interacts with MAP3K7/TAK1, TAB2 and TAB3 (By similarity). Interacts with HSPA8/HSC70, PSMC2, PSMC4, PSMC5 and PSMD7 (PubMed:20053985, PubMed:22078707). Interacts with SQSTM1 (PubMed:20357094, PubMed:25127057). Interacts (via B30.2/SPRY domain) with HSPA1A/B. Interacts with TRIM6 and TRIM34 (PubMed:21680743). Interacts with BECN1; GABARAP (PubMed:25127057). Interacts with ULK1 (phosphorylated form), GABARAPL1, GABARAPL2, MAP1LC3A and MAP1LC3C (By similarity).</text>
</comment>
<comment type="interaction">
    <interactant intactId="EBI-923856">
        <id>Q0PF16</id>
    </interactant>
    <interactant intactId="EBI-923856">
        <id>Q0PF16</id>
        <label>TRIM5</label>
    </interactant>
    <organismsDiffer>false</organismsDiffer>
    <experiments>3</experiments>
</comment>
<comment type="subcellular location">
    <subcellularLocation>
        <location evidence="7">Cytoplasm</location>
    </subcellularLocation>
    <subcellularLocation>
        <location evidence="7">Nucleus</location>
    </subcellularLocation>
    <text evidence="7 9 14">Predominantly localizes in cytoplasmic bodies (PubMed:20357094, PubMed:22078707). Localization may be influenced by the coexpression of other TRIM proteins, hence partial nuclear localization is observed in the presence of TRIM22 or TRIM27 (PubMed:17156811). In cytoplasmic bodies, colocalizes with proteasomal subunits and SQSTM1 (PubMed:20357094).</text>
</comment>
<comment type="alternative products">
    <event type="alternative splicing"/>
    <isoform>
        <id>Q0PF16-1</id>
        <name>1</name>
        <sequence type="displayed"/>
    </isoform>
    <isoform>
        <id>Q0PF16-2</id>
        <name>2</name>
        <sequence type="described" ref="VSP_022569 VSP_022570"/>
    </isoform>
</comment>
<comment type="domain">
    <text evidence="2 12">The B box-type zinc finger domain and the coiled-coil domain contribute to the higher and low order multimerization respectively which is essential for restriction activity (By similarity). The coiled coil domain is important for higher order multimerization by promoting the initial dimerization (PubMed:21680743).</text>
</comment>
<comment type="domain">
    <text evidence="13">The B30.2/SPRY domain acts as a capsid recognition domain. Polymorphisms in this domain explain the observed species-specific differences among orthologs.</text>
</comment>
<comment type="domain">
    <text evidence="7 13">The RING-type zinc finger domain confers E3 ubiquitin ligase activity and is essential for retrovirus restriction activity, autoubiquitination and higher-order multimerization.</text>
</comment>
<comment type="PTM">
    <text evidence="1">Degraded in a proteasome-independent fashion in the absence of viral infection but in a proteasome-dependent fashion following exposure to restriction sensitive virus.</text>
</comment>
<comment type="PTM">
    <text evidence="8 13">Autoubiquitinated in a RING finger- and UBE2D2-dependent manner. Monoubiquitinated by TRIM21. Deubiquitinated by Yersinia YopJ. Ubiquitination may not lead to proteasomal degradation.</text>
</comment>
<comment type="similarity">
    <text evidence="18">Belongs to the TRIM/RBCC family.</text>
</comment>
<accession>Q0PF16</accession>
<accession>Q0PF17</accession>
<accession>Q2YEN1</accession>
<accession>Q6GX25</accession>
<accession>Q6QWE9</accession>
<accession>Q6QWF0</accession>
<feature type="initiator methionine" description="Removed" evidence="2">
    <location>
        <position position="1"/>
    </location>
</feature>
<feature type="chain" id="PRO_0000273465" description="Tripartite motif-containing protein 5">
    <location>
        <begin position="2"/>
        <end position="497"/>
    </location>
</feature>
<feature type="domain" description="B30.2/SPRY" evidence="6">
    <location>
        <begin position="283"/>
        <end position="497"/>
    </location>
</feature>
<feature type="zinc finger region" description="RING-type" evidence="5">
    <location>
        <begin position="15"/>
        <end position="60"/>
    </location>
</feature>
<feature type="zinc finger region" description="B box-type" evidence="4">
    <location>
        <begin position="92"/>
        <end position="133"/>
    </location>
</feature>
<feature type="region of interest" description="Required for interaction with GABARAP and for autophagy" evidence="16">
    <location>
        <begin position="187"/>
        <end position="200"/>
    </location>
</feature>
<feature type="coiled-coil region" evidence="3">
    <location>
        <begin position="137"/>
        <end position="225"/>
    </location>
</feature>
<feature type="binding site" evidence="4">
    <location>
        <position position="97"/>
    </location>
    <ligand>
        <name>Zn(2+)</name>
        <dbReference type="ChEBI" id="CHEBI:29105"/>
    </ligand>
</feature>
<feature type="binding site" evidence="4">
    <location>
        <position position="100"/>
    </location>
    <ligand>
        <name>Zn(2+)</name>
        <dbReference type="ChEBI" id="CHEBI:29105"/>
    </ligand>
</feature>
<feature type="binding site" evidence="4">
    <location>
        <position position="119"/>
    </location>
    <ligand>
        <name>Zn(2+)</name>
        <dbReference type="ChEBI" id="CHEBI:29105"/>
    </ligand>
</feature>
<feature type="binding site" evidence="4">
    <location>
        <position position="125"/>
    </location>
    <ligand>
        <name>Zn(2+)</name>
        <dbReference type="ChEBI" id="CHEBI:29105"/>
    </ligand>
</feature>
<feature type="modified residue" description="N-acetylalanine" evidence="2">
    <location>
        <position position="2"/>
    </location>
</feature>
<feature type="modified residue" description="Phosphoserine" evidence="2">
    <location>
        <position position="87"/>
    </location>
</feature>
<feature type="splice variant" id="VSP_022569" description="In isoform 2." evidence="17">
    <original>VDVTLAPNNISHAVIAEDKRQVSSRNPQIMYQA</original>
    <variation>GKEKSHYHQPPCGLSLLLSLSFRILYSLLGLVF</variation>
    <location>
        <begin position="301"/>
        <end position="333"/>
    </location>
</feature>
<feature type="splice variant" id="VSP_022570" description="In isoform 2." evidence="17">
    <location>
        <begin position="334"/>
        <end position="497"/>
    </location>
</feature>
<feature type="mutagenesis site" description="No effect on dimerization or higher order self-association." evidence="12">
    <original>I</original>
    <variation>K</variation>
    <location>
        <position position="165"/>
    </location>
</feature>
<feature type="mutagenesis site" description="No effect on dimerization or higher order self-association; when associated with K-176." evidence="12">
    <original>W</original>
    <variation>K</variation>
    <location>
        <position position="172"/>
    </location>
</feature>
<feature type="mutagenesis site" description="No effect on dimerization or higher order self-association; when associated with K-172." evidence="12">
    <original>I</original>
    <variation>K</variation>
    <location>
        <position position="176"/>
    </location>
</feature>
<feature type="mutagenesis site" description="Fails to dimerise and exhibits reduced higher order self association." evidence="12">
    <original>L</original>
    <variation>K</variation>
    <location>
        <position position="194"/>
    </location>
</feature>
<feature type="mutagenesis site" description="No effect on dimerization or higher order self-association." evidence="12">
    <original>L</original>
    <variation>K</variation>
    <location>
        <position position="202"/>
    </location>
</feature>
<feature type="mutagenesis site" description="No effect on dimerization or higher order self-association." evidence="12">
    <original>L</original>
    <variation>K</variation>
    <location>
        <position position="205"/>
    </location>
</feature>
<feature type="mutagenesis site" description="No effect on dimerization or higher order self-association." evidence="12">
    <original>L</original>
    <variation>K</variation>
    <location>
        <position position="216"/>
    </location>
</feature>
<feature type="mutagenesis site" description="No effect on dimerization or higher order self-association." evidence="12">
    <original>S</original>
    <variation>K</variation>
    <location>
        <position position="219"/>
    </location>
</feature>
<feature type="mutagenesis site" description="No effect on dimerization or higher order self-association." evidence="12">
    <original>M</original>
    <variation>K</variation>
    <location>
        <position position="230"/>
    </location>
</feature>
<feature type="mutagenesis site" description="No effect on dimerization or higher order self-association." evidence="12">
    <original>I</original>
    <variation>K</variation>
    <location>
        <position position="234"/>
    </location>
</feature>
<feature type="mutagenesis site" description="No effect on dimerization or higher order self-association." evidence="12">
    <original>L</original>
    <variation>K</variation>
    <location>
        <position position="237"/>
    </location>
</feature>
<feature type="mutagenesis site" description="No effect on dimerization but exhibits a 3-fold decrease in the efficiency of higher order association." evidence="12">
    <original>DLL</original>
    <variation>KDD</variation>
    <location>
        <begin position="247"/>
        <end position="249"/>
    </location>
</feature>
<feature type="sequence conflict" description="In Ref. 1; AAT48102." evidence="18" ref="1">
    <original>L</original>
    <variation>V</variation>
    <location>
        <position position="7"/>
    </location>
</feature>
<feature type="sequence conflict" description="In Ref. 2; AAX86682." evidence="18" ref="2">
    <original>I</original>
    <variation>T</variation>
    <location>
        <position position="174"/>
    </location>
</feature>
<feature type="sequence conflict" description="In Ref. 2; AAX86682." evidence="18" ref="2">
    <original>D</original>
    <variation>Q</variation>
    <location>
        <position position="177"/>
    </location>
</feature>
<feature type="sequence conflict" description="In Ref. 2; AAX86682." evidence="18" ref="2">
    <original>S</original>
    <variation>L</variation>
    <location>
        <position position="184"/>
    </location>
</feature>
<feature type="sequence conflict" description="In Ref. 2; AAX86682." evidence="18" ref="2">
    <original>E</original>
    <variation>D</variation>
    <location>
        <position position="192"/>
    </location>
</feature>
<feature type="sequence conflict" description="In Ref. 2; AAX86682." evidence="18" ref="2">
    <original>K</original>
    <variation>N</variation>
    <location>
        <position position="218"/>
    </location>
</feature>
<feature type="sequence conflict" description="In Ref. 5; ABG67967." evidence="18" ref="5">
    <original>T</original>
    <variation>M</variation>
    <location>
        <position position="221"/>
    </location>
</feature>
<feature type="sequence conflict" description="In Ref. 2; AAX86682." evidence="18" ref="2">
    <original>YM</original>
    <variation>SL</variation>
    <location>
        <begin position="229"/>
        <end position="230"/>
    </location>
</feature>
<feature type="sequence conflict" description="In Ref. 2; AAX86682 and 5; ABG67966." evidence="18" ref="2 5">
    <original>E</original>
    <variation>D</variation>
    <location>
        <position position="236"/>
    </location>
</feature>
<feature type="sequence conflict" description="In Ref. 1; AAT48102, 3; ABL14041 and 4; AAS48505." evidence="18" ref="1 3 4">
    <original>P</original>
    <variation>T</variation>
    <location>
        <position position="307"/>
    </location>
</feature>
<feature type="sequence conflict" description="In Ref. 5; ABG67966." evidence="18" ref="5">
    <original>A</original>
    <variation>S</variation>
    <location>
        <position position="333"/>
    </location>
</feature>
<feature type="sequence conflict" description="In Ref. 5; ABG67966." evidence="18" ref="5">
    <original>TFP</original>
    <variation>Q</variation>
    <location>
        <begin position="339"/>
        <end position="341"/>
    </location>
</feature>
<feature type="helix" evidence="22">
    <location>
        <begin position="6"/>
        <end position="12"/>
    </location>
</feature>
<feature type="turn" evidence="22">
    <location>
        <begin position="16"/>
        <end position="18"/>
    </location>
</feature>
<feature type="strand" evidence="22">
    <location>
        <begin position="23"/>
        <end position="27"/>
    </location>
</feature>
<feature type="strand" evidence="22">
    <location>
        <begin position="33"/>
        <end position="35"/>
    </location>
</feature>
<feature type="helix" evidence="22">
    <location>
        <begin position="36"/>
        <end position="38"/>
    </location>
</feature>
<feature type="turn" evidence="22">
    <location>
        <begin position="57"/>
        <end position="59"/>
    </location>
</feature>
<feature type="helix" evidence="22">
    <location>
        <begin position="72"/>
        <end position="79"/>
    </location>
</feature>
<feature type="turn" evidence="24">
    <location>
        <begin position="98"/>
        <end position="100"/>
    </location>
</feature>
<feature type="strand" evidence="24">
    <location>
        <begin position="106"/>
        <end position="108"/>
    </location>
</feature>
<feature type="turn" evidence="24">
    <location>
        <begin position="109"/>
        <end position="112"/>
    </location>
</feature>
<feature type="strand" evidence="24">
    <location>
        <begin position="113"/>
        <end position="115"/>
    </location>
</feature>
<feature type="helix" evidence="24">
    <location>
        <begin position="117"/>
        <end position="121"/>
    </location>
</feature>
<feature type="helix" evidence="24">
    <location>
        <begin position="123"/>
        <end position="125"/>
    </location>
</feature>
<feature type="strand" evidence="24">
    <location>
        <begin position="130"/>
        <end position="132"/>
    </location>
</feature>
<feature type="helix" evidence="23">
    <location>
        <begin position="133"/>
        <end position="159"/>
    </location>
</feature>
<feature type="helix" evidence="23">
    <location>
        <begin position="226"/>
        <end position="242"/>
    </location>
</feature>
<feature type="helix" evidence="23">
    <location>
        <begin position="245"/>
        <end position="249"/>
    </location>
</feature>
<feature type="helix" evidence="23">
    <location>
        <begin position="252"/>
        <end position="261"/>
    </location>
</feature>
<feature type="helix" evidence="25">
    <location>
        <begin position="282"/>
        <end position="286"/>
    </location>
</feature>
<feature type="helix" evidence="20">
    <location>
        <begin position="292"/>
        <end position="296"/>
    </location>
</feature>
<feature type="helix" evidence="20">
    <location>
        <begin position="297"/>
        <end position="299"/>
    </location>
</feature>
<feature type="strand" evidence="21">
    <location>
        <begin position="319"/>
        <end position="323"/>
    </location>
</feature>
<feature type="strand" evidence="19">
    <location>
        <begin position="327"/>
        <end position="329"/>
    </location>
</feature>
<feature type="turn" evidence="19">
    <location>
        <begin position="330"/>
        <end position="332"/>
    </location>
</feature>
<feature type="strand" evidence="19">
    <location>
        <begin position="334"/>
        <end position="336"/>
    </location>
</feature>
<feature type="strand" evidence="21">
    <location>
        <begin position="352"/>
        <end position="356"/>
    </location>
</feature>
<feature type="strand" evidence="20">
    <location>
        <begin position="360"/>
        <end position="368"/>
    </location>
</feature>
<feature type="strand" evidence="20">
    <location>
        <begin position="375"/>
        <end position="381"/>
    </location>
</feature>
<feature type="turn" evidence="20">
    <location>
        <begin position="384"/>
        <end position="390"/>
    </location>
</feature>
<feature type="helix" evidence="20">
    <location>
        <begin position="391"/>
        <end position="394"/>
    </location>
</feature>
<feature type="helix" evidence="20">
    <location>
        <begin position="399"/>
        <end position="401"/>
    </location>
</feature>
<feature type="strand" evidence="20">
    <location>
        <begin position="403"/>
        <end position="409"/>
    </location>
</feature>
<feature type="turn" evidence="20">
    <location>
        <begin position="410"/>
        <end position="412"/>
    </location>
</feature>
<feature type="strand" evidence="20">
    <location>
        <begin position="413"/>
        <end position="418"/>
    </location>
</feature>
<feature type="strand" evidence="20">
    <location>
        <begin position="429"/>
        <end position="432"/>
    </location>
</feature>
<feature type="strand" evidence="20">
    <location>
        <begin position="440"/>
        <end position="447"/>
    </location>
</feature>
<feature type="turn" evidence="20">
    <location>
        <begin position="448"/>
        <end position="451"/>
    </location>
</feature>
<feature type="strand" evidence="20">
    <location>
        <begin position="452"/>
        <end position="457"/>
    </location>
</feature>
<feature type="turn" evidence="20">
    <location>
        <begin position="458"/>
        <end position="462"/>
    </location>
</feature>
<feature type="strand" evidence="20">
    <location>
        <begin position="463"/>
        <end position="468"/>
    </location>
</feature>
<feature type="strand" evidence="20">
    <location>
        <begin position="477"/>
        <end position="482"/>
    </location>
</feature>
<feature type="strand" evidence="21">
    <location>
        <begin position="490"/>
        <end position="492"/>
    </location>
</feature>
<sequence>MASGILLNVKEEVTCPICLELLTEPLSLHCGHSFCQACITANHKKSMLYKEGERSCPVCRISYQPENIQPNRHVANIVEKLREVKLSPEEGQKVDHCARHGEKLLLFCQEDSKVICWLCERSQEHRGHHTFLMEEVAQEYHVKLQTALEMLRQKQQEAEKLEADIREEKASWKIQIDYDKTNVSADFEQLREILDWEESNELQNLEKEEEDILKSLTKSETEMVQQTQYMRELISELEHRLQGSMMDLLQGVDGIIKRIENMTLKKPKTFHKNQRRVFRAPDLKGMLDMFRELTDARRYWVDVTLAPNNISHAVIAEDKRQVSSRNPQIMYQAPGTLFTFPSLTNFNYCTGVLGSQSITSGKHYWEVDVSKKSAWILGVCAGFQSDAMYNIEQNENYQPKYGYWVIGLQEGVKYSVFQDGSSHTPFAPFIVPLSVIICPDRVGVFVDYEACTVSFFNITNHGFLIYKFSQCSFSKPVFPYLNPRKCTVPMTLCSPSS</sequence>
<proteinExistence type="evidence at protein level"/>
<organism>
    <name type="scientific">Macaca mulatta</name>
    <name type="common">Rhesus macaque</name>
    <dbReference type="NCBI Taxonomy" id="9544"/>
    <lineage>
        <taxon>Eukaryota</taxon>
        <taxon>Metazoa</taxon>
        <taxon>Chordata</taxon>
        <taxon>Craniata</taxon>
        <taxon>Vertebrata</taxon>
        <taxon>Euteleostomi</taxon>
        <taxon>Mammalia</taxon>
        <taxon>Eutheria</taxon>
        <taxon>Euarchontoglires</taxon>
        <taxon>Primates</taxon>
        <taxon>Haplorrhini</taxon>
        <taxon>Catarrhini</taxon>
        <taxon>Cercopithecidae</taxon>
        <taxon>Cercopithecinae</taxon>
        <taxon>Macaca</taxon>
    </lineage>
</organism>
<evidence type="ECO:0000250" key="1"/>
<evidence type="ECO:0000250" key="2">
    <source>
        <dbReference type="UniProtKB" id="Q9C035"/>
    </source>
</evidence>
<evidence type="ECO:0000255" key="3"/>
<evidence type="ECO:0000255" key="4">
    <source>
        <dbReference type="PROSITE-ProRule" id="PRU00024"/>
    </source>
</evidence>
<evidence type="ECO:0000255" key="5">
    <source>
        <dbReference type="PROSITE-ProRule" id="PRU00175"/>
    </source>
</evidence>
<evidence type="ECO:0000255" key="6">
    <source>
        <dbReference type="PROSITE-ProRule" id="PRU00548"/>
    </source>
</evidence>
<evidence type="ECO:0000269" key="7">
    <source>
    </source>
</evidence>
<evidence type="ECO:0000269" key="8">
    <source>
    </source>
</evidence>
<evidence type="ECO:0000269" key="9">
    <source>
    </source>
</evidence>
<evidence type="ECO:0000269" key="10">
    <source>
    </source>
</evidence>
<evidence type="ECO:0000269" key="11">
    <source>
    </source>
</evidence>
<evidence type="ECO:0000269" key="12">
    <source>
    </source>
</evidence>
<evidence type="ECO:0000269" key="13">
    <source>
    </source>
</evidence>
<evidence type="ECO:0000269" key="14">
    <source>
    </source>
</evidence>
<evidence type="ECO:0000269" key="15">
    <source>
    </source>
</evidence>
<evidence type="ECO:0000269" key="16">
    <source>
    </source>
</evidence>
<evidence type="ECO:0000303" key="17">
    <source ref="4"/>
</evidence>
<evidence type="ECO:0000305" key="18"/>
<evidence type="ECO:0007829" key="19">
    <source>
        <dbReference type="PDB" id="2LM3"/>
    </source>
</evidence>
<evidence type="ECO:0007829" key="20">
    <source>
        <dbReference type="PDB" id="3UV9"/>
    </source>
</evidence>
<evidence type="ECO:0007829" key="21">
    <source>
        <dbReference type="PDB" id="4B3N"/>
    </source>
</evidence>
<evidence type="ECO:0007829" key="22">
    <source>
        <dbReference type="PDB" id="4TKP"/>
    </source>
</evidence>
<evidence type="ECO:0007829" key="23">
    <source>
        <dbReference type="PDB" id="5EIU"/>
    </source>
</evidence>
<evidence type="ECO:0007829" key="24">
    <source>
        <dbReference type="PDB" id="5K3Q"/>
    </source>
</evidence>
<evidence type="ECO:0007829" key="25">
    <source>
        <dbReference type="PDB" id="5W9A"/>
    </source>
</evidence>
<reference key="1">
    <citation type="journal article" date="2004" name="Proc. Natl. Acad. Sci. U.S.A.">
        <title>Trim5alpha protein restricts both HIV-1 and murine leukemia virus.</title>
        <authorList>
            <person name="Yap M.W."/>
            <person name="Nisole S."/>
            <person name="Lynch C."/>
            <person name="Stoye J.P."/>
        </authorList>
    </citation>
    <scope>NUCLEOTIDE SEQUENCE [MRNA] (ISOFORM 1)</scope>
</reference>
<reference key="2">
    <citation type="journal article" date="2005" name="Gene">
        <title>Adaptive evolution of primate TRIM5alpha, a gene restricting HIV-1 infection.</title>
        <authorList>
            <person name="Liu H.L."/>
            <person name="Wang Y.Q."/>
            <person name="Liao C.H."/>
            <person name="Kuang Y.Q."/>
            <person name="Zheng Y.T."/>
            <person name="Su B."/>
        </authorList>
    </citation>
    <scope>NUCLEOTIDE SEQUENCE [GENOMIC DNA]</scope>
    <scope>ALTERNATIVE SPLICING (ISOFORM 1)</scope>
</reference>
<reference key="3">
    <citation type="journal article" date="2006" name="Proc. Natl. Acad. Sci. U.S.A.">
        <title>Balancing selection and the evolution of functional polymorphism in Old World monkey TRIM5alpha.</title>
        <authorList>
            <person name="Newman R.M."/>
            <person name="Hall L."/>
            <person name="Connole M."/>
            <person name="Chen G.L."/>
            <person name="Sato S."/>
            <person name="Yuste E."/>
            <person name="Diehl W."/>
            <person name="Hunter E."/>
            <person name="Kaur A."/>
            <person name="Miller G.M."/>
            <person name="Johnson W.E."/>
        </authorList>
    </citation>
    <scope>NUCLEOTIDE SEQUENCE [MRNA] (ISOFORM 1)</scope>
</reference>
<reference key="4">
    <citation type="submission" date="2004-01" db="EMBL/GenBank/DDBJ databases">
        <authorList>
            <person name="Stremlau M.H."/>
            <person name="Sodroski J."/>
        </authorList>
    </citation>
    <scope>NUCLEOTIDE SEQUENCE [MRNA] (ISOFORMS 1 AND 2)</scope>
</reference>
<reference key="5">
    <citation type="submission" date="2006-07" db="EMBL/GenBank/DDBJ databases">
        <authorList>
            <person name="Miller C.J."/>
            <person name="Dutra J.C."/>
        </authorList>
    </citation>
    <scope>NUCLEOTIDE SEQUENCE [MRNA] (ISOFORM 1)</scope>
</reference>
<reference key="6">
    <citation type="journal article" date="2005" name="J. Virol.">
        <title>Retroviral restriction factor TRIM5alpha is a trimer.</title>
        <authorList>
            <person name="Mische C.C."/>
            <person name="Javanbakht H."/>
            <person name="Song B."/>
            <person name="Diaz-Griffero F."/>
            <person name="Stremlau M."/>
            <person name="Strack B."/>
            <person name="Si Z."/>
            <person name="Sodroski J."/>
        </authorList>
    </citation>
    <scope>TRIMERIZATION</scope>
</reference>
<reference key="7">
    <citation type="journal article" date="2006" name="Virology">
        <title>Characterization of TRIM5alpha trimerization and its contribution to human immunodeficiency virus capsid binding.</title>
        <authorList>
            <person name="Javanbakht H."/>
            <person name="Yuan W."/>
            <person name="Yeung D.F."/>
            <person name="Song B."/>
            <person name="Diaz-Griffero F."/>
            <person name="Li Y."/>
            <person name="Li X."/>
            <person name="Stremlau M."/>
            <person name="Sodroski J."/>
        </authorList>
    </citation>
    <scope>TRIMERIZATION</scope>
</reference>
<reference key="8">
    <citation type="journal article" date="2007" name="Virology">
        <title>Unique features of TRIM5alpha among closely related human TRIM family members.</title>
        <authorList>
            <person name="Li X."/>
            <person name="Gold B."/>
            <person name="O'hUigin C."/>
            <person name="Diaz-Griffero F."/>
            <person name="Song B."/>
            <person name="Si Z."/>
            <person name="Li Y."/>
            <person name="Yuan W."/>
            <person name="Stremlau M."/>
            <person name="Mische C."/>
            <person name="Javanbakht H."/>
            <person name="Scally M."/>
            <person name="Winkler C."/>
            <person name="Dean M."/>
            <person name="Sodroski J."/>
        </authorList>
    </citation>
    <scope>SUBUNIT</scope>
    <scope>SUBCELLULAR LOCATION</scope>
    <scope>DOMAIN</scope>
</reference>
<reference key="9">
    <citation type="journal article" date="2010" name="J. Biol. Chem.">
        <title>Hsp70 interacts with the retroviral restriction factor TRIM5alpha and assists the folding of TRIM5alpha.</title>
        <authorList>
            <person name="Hwang C.Y."/>
            <person name="Holl J."/>
            <person name="Rajan D."/>
            <person name="Lee Y."/>
            <person name="Kim S."/>
            <person name="Um M."/>
            <person name="Kwon K.S."/>
            <person name="Song B."/>
        </authorList>
    </citation>
    <scope>INTERACTION WITH HSPA1A/B AND HSPA8</scope>
    <scope>AUTOUBIQUITINATION</scope>
</reference>
<reference key="10">
    <citation type="journal article" date="2010" name="J. Virol.">
        <title>p62/sequestosome-1 associates with and sustains the expression of retroviral restriction factor TRIM5alpha.</title>
        <authorList>
            <person name="O'Connor C."/>
            <person name="Pertel T."/>
            <person name="Gray S."/>
            <person name="Robia S.L."/>
            <person name="Bakowska J.C."/>
            <person name="Luban J."/>
            <person name="Campbell E.M."/>
        </authorList>
    </citation>
    <scope>INTERACTION WITH SQSTM1</scope>
    <scope>SUBCELLULAR LOCATION</scope>
</reference>
<reference key="11">
    <citation type="journal article" date="2011" name="AIDS Res. Hum. Retroviruses">
        <title>Recent insights into the mechanism and consequences of TRIM5alpha retroviral restriction.</title>
        <authorList>
            <person name="Sastri J."/>
            <person name="Campbell E.M."/>
        </authorList>
    </citation>
    <scope>REVIEW</scope>
</reference>
<reference key="12">
    <citation type="journal article" date="2011" name="J. Biol. Chem.">
        <title>Determinants of the higher order association of the restriction factor TRIM5alpha and other tripartite motif (TRIM) proteins.</title>
        <authorList>
            <person name="Li X."/>
            <person name="Yeung D.F."/>
            <person name="Fiegen A.M."/>
            <person name="Sodroski J."/>
        </authorList>
    </citation>
    <scope>INTERACTION WITH TRIM6 AND TRIM34</scope>
    <scope>MUTAGENESIS OF ILE-165; TRP-172; ILE-176; LEU-194; LEU-202; LEU-205; LEU-216; SER-219; MET-230; ILE-234; LEU-237 AND 247-ASP--LEU-249</scope>
    <scope>DOMAIN</scope>
</reference>
<reference key="13">
    <citation type="journal article" date="2011" name="J. Virol.">
        <title>Contribution of E3-ubiquitin ligase activity to HIV-1 restriction by TRIM5alpha(rh): structure of the RING domain of TRIM5alpha.</title>
        <authorList>
            <person name="Lienlaf M."/>
            <person name="Hayashi F."/>
            <person name="Di Nunzio F."/>
            <person name="Tochio N."/>
            <person name="Kigawa T."/>
            <person name="Yokoyama S."/>
            <person name="Diaz-Griffero F."/>
        </authorList>
    </citation>
    <scope>FUNCTION</scope>
    <scope>DOMAIN RING</scope>
    <scope>SUBUNIT</scope>
    <scope>AUTOUBIQUITINATION</scope>
</reference>
<reference key="14">
    <citation type="journal article" date="2011" name="Proc. Natl. Acad. Sci. U.S.A.">
        <title>Hexagonal assembly of a restricting TRIM5alpha protein.</title>
        <authorList>
            <person name="Ganser-Pornillos B.K."/>
            <person name="Chandrasekaran V."/>
            <person name="Pornillos O."/>
            <person name="Sodroski J.G."/>
            <person name="Sundquist W.I."/>
            <person name="Yeager M."/>
        </authorList>
    </citation>
    <scope>SUBUNIT</scope>
</reference>
<reference key="15">
    <citation type="journal article" date="2011" name="Retrovirology">
        <title>TRIM5alpha associates with proteasomal subunits in cells while in complex with HIV-1 virions.</title>
        <authorList>
            <person name="Lukic Z."/>
            <person name="Hausmann S."/>
            <person name="Sebastian S."/>
            <person name="Rucci J."/>
            <person name="Sastri J."/>
            <person name="Robia S.L."/>
            <person name="Luban J."/>
            <person name="Campbell E.M."/>
        </authorList>
    </citation>
    <scope>INTERACTION WITH PSMC2; PSMC4; PSMC5 AND PSMD7</scope>
    <scope>SUBCELLULAR LOCATION</scope>
</reference>
<reference key="16">
    <citation type="journal article" date="2011" name="Virology">
        <title>Human Trim5alpha has additional activities that are uncoupled from retroviral capsid recognition.</title>
        <authorList>
            <person name="Tareen S.U."/>
            <person name="Emerman M."/>
        </authorList>
    </citation>
    <scope>FUNCTION</scope>
</reference>
<reference key="17">
    <citation type="journal article" date="2011" name="Viruses">
        <title>Caging the beast: TRIM5-binding to the HIV-1 core.</title>
        <authorList>
            <person name="Diaz-Griffero F."/>
        </authorList>
    </citation>
    <scope>REVIEW</scope>
</reference>
<reference key="18">
    <citation type="journal article" date="2012" name="Curr. Opin. Virol.">
        <title>TRIM5 structure, HIV-1 capsid recognition, and innate immune signaling.</title>
        <authorList>
            <person name="Gruetter M.G."/>
            <person name="Luban J."/>
        </authorList>
    </citation>
    <scope>REVIEW</scope>
</reference>
<reference key="19">
    <citation type="journal article" date="2012" name="Front. Microbiol.">
        <title>TRIM5alpha and species tropism of HIV/SIV.</title>
        <authorList>
            <person name="Nakayama E.E."/>
            <person name="Shioda T."/>
        </authorList>
    </citation>
    <scope>REVIEW</scope>
    <scope>FUNCTION</scope>
</reference>
<reference key="20">
    <citation type="journal article" date="2012" name="Mol. Biol. Int.">
        <title>TRIM5 and the regulation of HIV-1 infectivity.</title>
        <authorList>
            <person name="Luban J."/>
        </authorList>
    </citation>
    <scope>REVIEW</scope>
</reference>
<reference key="21">
    <citation type="journal article" date="2014" name="Dev. Cell">
        <title>TRIM proteins regulate autophagy and can target autophagic substrates by direct recognition.</title>
        <authorList>
            <person name="Mandell M.A."/>
            <person name="Jain A."/>
            <person name="Arko-Mensah J."/>
            <person name="Chauhan S."/>
            <person name="Kimura T."/>
            <person name="Dinkins C."/>
            <person name="Silvestri G."/>
            <person name="Munch J."/>
            <person name="Kirchhoff F."/>
            <person name="Simonsen A."/>
            <person name="Wei Y."/>
            <person name="Levine B."/>
            <person name="Johansen T."/>
            <person name="Deretic V."/>
        </authorList>
    </citation>
    <scope>FUNCTION</scope>
    <scope>INTERACTION WITH BECN1; SQSTM1 AND GABARAP</scope>
    <scope>SUBCELLULAR LOCATION</scope>
</reference>
<reference key="22">
    <citation type="journal article" date="2012" name="Proc. Natl. Acad. Sci. U.S.A.">
        <title>Structure of the rhesus monkey TRIM5alpha PRYSPRY domain, the HIV capsid recognition module.</title>
        <authorList>
            <person name="Biris N."/>
            <person name="Yang Y."/>
            <person name="Taylor A.B."/>
            <person name="Tomashevski A."/>
            <person name="Guo M."/>
            <person name="Hart P.J."/>
            <person name="Diaz-Griffero F."/>
            <person name="Ivanov D.N."/>
        </authorList>
    </citation>
    <scope>X-RAY CRYSTALLOGRAPHY (1.55 ANGSTROMS) OF 292-497</scope>
</reference>
<dbReference type="EC" id="2.3.2.27"/>
<dbReference type="EMBL" id="AY625001">
    <property type="protein sequence ID" value="AAT48102.1"/>
    <property type="molecule type" value="mRNA"/>
</dbReference>
<dbReference type="EMBL" id="AY899886">
    <property type="protein sequence ID" value="AAX86682.1"/>
    <property type="molecule type" value="Genomic_DNA"/>
</dbReference>
<dbReference type="EMBL" id="AY899880">
    <property type="protein sequence ID" value="AAX86682.1"/>
    <property type="status" value="JOINED"/>
    <property type="molecule type" value="Genomic_DNA"/>
</dbReference>
<dbReference type="EMBL" id="AY899881">
    <property type="protein sequence ID" value="AAX86682.1"/>
    <property type="status" value="JOINED"/>
    <property type="molecule type" value="Genomic_DNA"/>
</dbReference>
<dbReference type="EMBL" id="AY899882">
    <property type="protein sequence ID" value="AAX86682.1"/>
    <property type="status" value="JOINED"/>
    <property type="molecule type" value="Genomic_DNA"/>
</dbReference>
<dbReference type="EMBL" id="AY899883">
    <property type="protein sequence ID" value="AAX86682.1"/>
    <property type="status" value="JOINED"/>
    <property type="molecule type" value="Genomic_DNA"/>
</dbReference>
<dbReference type="EMBL" id="AY899884">
    <property type="protein sequence ID" value="AAX86682.1"/>
    <property type="status" value="JOINED"/>
    <property type="molecule type" value="Genomic_DNA"/>
</dbReference>
<dbReference type="EMBL" id="AY899885">
    <property type="protein sequence ID" value="AAX86682.1"/>
    <property type="status" value="JOINED"/>
    <property type="molecule type" value="Genomic_DNA"/>
</dbReference>
<dbReference type="EMBL" id="EF113914">
    <property type="protein sequence ID" value="ABL14041.1"/>
    <property type="molecule type" value="mRNA"/>
</dbReference>
<dbReference type="EMBL" id="AY523632">
    <property type="protein sequence ID" value="AAS48505.1"/>
    <property type="molecule type" value="mRNA"/>
</dbReference>
<dbReference type="EMBL" id="AY523633">
    <property type="protein sequence ID" value="AAS48506.1"/>
    <property type="molecule type" value="mRNA"/>
</dbReference>
<dbReference type="EMBL" id="DQ842020">
    <property type="protein sequence ID" value="ABG67966.1"/>
    <property type="molecule type" value="mRNA"/>
</dbReference>
<dbReference type="EMBL" id="DQ842021">
    <property type="protein sequence ID" value="ABG67967.1"/>
    <property type="molecule type" value="mRNA"/>
</dbReference>
<dbReference type="RefSeq" id="NP_001028082.1">
    <property type="nucleotide sequence ID" value="NM_001032910.1"/>
</dbReference>
<dbReference type="PDB" id="2LM3">
    <property type="method" value="NMR"/>
    <property type="chains" value="A=292-497"/>
</dbReference>
<dbReference type="PDB" id="3UV9">
    <property type="method" value="X-ray"/>
    <property type="resolution" value="1.55 A"/>
    <property type="chains" value="A=292-325, A=350-497"/>
</dbReference>
<dbReference type="PDB" id="4B3N">
    <property type="method" value="X-ray"/>
    <property type="resolution" value="3.30 A"/>
    <property type="chains" value="A/B=275-493"/>
</dbReference>
<dbReference type="PDB" id="4TKP">
    <property type="method" value="X-ray"/>
    <property type="resolution" value="2.08 A"/>
    <property type="chains" value="B=2-92"/>
</dbReference>
<dbReference type="PDB" id="5EIU">
    <property type="method" value="X-ray"/>
    <property type="resolution" value="1.91 A"/>
    <property type="chains" value="A/D=89-159, A/D=226-265"/>
</dbReference>
<dbReference type="PDB" id="5F7T">
    <property type="method" value="X-ray"/>
    <property type="resolution" value="2.29 A"/>
    <property type="chains" value="E/F/H/L=89-159, E/F/H/L=226-265"/>
</dbReference>
<dbReference type="PDB" id="5IEA">
    <property type="method" value="X-ray"/>
    <property type="resolution" value="3.26 A"/>
    <property type="chains" value="A/B/C/D/F/K=89-159, A/B/C/D/F/K=226-265"/>
</dbReference>
<dbReference type="PDB" id="5K3Q">
    <property type="method" value="X-ray"/>
    <property type="resolution" value="1.80 A"/>
    <property type="chains" value="A/B/C/D=94-154, A/B/C/D=229-261"/>
</dbReference>
<dbReference type="PDB" id="5W9A">
    <property type="method" value="X-ray"/>
    <property type="resolution" value="2.74 A"/>
    <property type="chains" value="A/B=95-287"/>
</dbReference>
<dbReference type="PDBsum" id="2LM3"/>
<dbReference type="PDBsum" id="3UV9"/>
<dbReference type="PDBsum" id="4B3N"/>
<dbReference type="PDBsum" id="4TKP"/>
<dbReference type="PDBsum" id="5EIU"/>
<dbReference type="PDBsum" id="5F7T"/>
<dbReference type="PDBsum" id="5IEA"/>
<dbReference type="PDBsum" id="5K3Q"/>
<dbReference type="PDBsum" id="5W9A"/>
<dbReference type="BMRB" id="Q0PF16"/>
<dbReference type="SMR" id="Q0PF16"/>
<dbReference type="BioGRID" id="695095">
    <property type="interactions" value="300"/>
</dbReference>
<dbReference type="FunCoup" id="Q0PF16">
    <property type="interactions" value="200"/>
</dbReference>
<dbReference type="IntAct" id="Q0PF16">
    <property type="interactions" value="1"/>
</dbReference>
<dbReference type="STRING" id="9544.ENSMMUP00000050746"/>
<dbReference type="PaxDb" id="9544-ENSMMUP00000000454"/>
<dbReference type="GeneID" id="574288"/>
<dbReference type="KEGG" id="mcc:574288"/>
<dbReference type="CTD" id="85363"/>
<dbReference type="eggNOG" id="KOG2177">
    <property type="taxonomic scope" value="Eukaryota"/>
</dbReference>
<dbReference type="HOGENOM" id="CLU_013137_0_3_1"/>
<dbReference type="InParanoid" id="Q0PF16"/>
<dbReference type="OrthoDB" id="654191at2759"/>
<dbReference type="TreeFam" id="TF338674"/>
<dbReference type="UniPathway" id="UPA00143"/>
<dbReference type="EvolutionaryTrace" id="Q0PF16"/>
<dbReference type="Proteomes" id="UP000006718">
    <property type="component" value="Unassembled WGS sequence"/>
</dbReference>
<dbReference type="GO" id="GO:0005737">
    <property type="term" value="C:cytoplasm"/>
    <property type="evidence" value="ECO:0000315"/>
    <property type="project" value="UniProtKB"/>
</dbReference>
<dbReference type="GO" id="GO:0005634">
    <property type="term" value="C:nucleus"/>
    <property type="evidence" value="ECO:0007669"/>
    <property type="project" value="UniProtKB-SubCell"/>
</dbReference>
<dbReference type="GO" id="GO:0000932">
    <property type="term" value="C:P-body"/>
    <property type="evidence" value="ECO:0000314"/>
    <property type="project" value="UniProtKB"/>
</dbReference>
<dbReference type="GO" id="GO:0042802">
    <property type="term" value="F:identical protein binding"/>
    <property type="evidence" value="ECO:0000353"/>
    <property type="project" value="IntAct"/>
</dbReference>
<dbReference type="GO" id="GO:0038187">
    <property type="term" value="F:pattern recognition receptor activity"/>
    <property type="evidence" value="ECO:0000250"/>
    <property type="project" value="UniProtKB"/>
</dbReference>
<dbReference type="GO" id="GO:0042803">
    <property type="term" value="F:protein homodimerization activity"/>
    <property type="evidence" value="ECO:0000318"/>
    <property type="project" value="GO_Central"/>
</dbReference>
<dbReference type="GO" id="GO:0019901">
    <property type="term" value="F:protein kinase binding"/>
    <property type="evidence" value="ECO:0000318"/>
    <property type="project" value="GO_Central"/>
</dbReference>
<dbReference type="GO" id="GO:0061630">
    <property type="term" value="F:ubiquitin protein ligase activity"/>
    <property type="evidence" value="ECO:0000318"/>
    <property type="project" value="GO_Central"/>
</dbReference>
<dbReference type="GO" id="GO:0004842">
    <property type="term" value="F:ubiquitin-protein transferase activity"/>
    <property type="evidence" value="ECO:0000250"/>
    <property type="project" value="UniProtKB"/>
</dbReference>
<dbReference type="GO" id="GO:0008270">
    <property type="term" value="F:zinc ion binding"/>
    <property type="evidence" value="ECO:0007669"/>
    <property type="project" value="UniProtKB-KW"/>
</dbReference>
<dbReference type="GO" id="GO:0002218">
    <property type="term" value="P:activation of innate immune response"/>
    <property type="evidence" value="ECO:0000250"/>
    <property type="project" value="UniProtKB"/>
</dbReference>
<dbReference type="GO" id="GO:0006914">
    <property type="term" value="P:autophagy"/>
    <property type="evidence" value="ECO:0000314"/>
    <property type="project" value="UniProtKB"/>
</dbReference>
<dbReference type="GO" id="GO:0051607">
    <property type="term" value="P:defense response to virus"/>
    <property type="evidence" value="ECO:0000304"/>
    <property type="project" value="UniProtKB"/>
</dbReference>
<dbReference type="GO" id="GO:0046597">
    <property type="term" value="P:host-mediated suppression of symbiont invasion"/>
    <property type="evidence" value="ECO:0000314"/>
    <property type="project" value="UniProtKB"/>
</dbReference>
<dbReference type="GO" id="GO:0045087">
    <property type="term" value="P:innate immune response"/>
    <property type="evidence" value="ECO:0000314"/>
    <property type="project" value="UniProtKB"/>
</dbReference>
<dbReference type="GO" id="GO:0045071">
    <property type="term" value="P:negative regulation of viral genome replication"/>
    <property type="evidence" value="ECO:0000315"/>
    <property type="project" value="UniProtKB"/>
</dbReference>
<dbReference type="GO" id="GO:0032897">
    <property type="term" value="P:negative regulation of viral transcription"/>
    <property type="evidence" value="ECO:0000314"/>
    <property type="project" value="UniProtKB"/>
</dbReference>
<dbReference type="GO" id="GO:0043123">
    <property type="term" value="P:positive regulation of canonical NF-kappaB signal transduction"/>
    <property type="evidence" value="ECO:0000314"/>
    <property type="project" value="UniProtKB"/>
</dbReference>
<dbReference type="GO" id="GO:0051091">
    <property type="term" value="P:positive regulation of DNA-binding transcription factor activity"/>
    <property type="evidence" value="ECO:0000314"/>
    <property type="project" value="UniProtKB"/>
</dbReference>
<dbReference type="GO" id="GO:0043410">
    <property type="term" value="P:positive regulation of MAPK cascade"/>
    <property type="evidence" value="ECO:0000250"/>
    <property type="project" value="UniProtKB"/>
</dbReference>
<dbReference type="GO" id="GO:0051092">
    <property type="term" value="P:positive regulation of NF-kappaB transcription factor activity"/>
    <property type="evidence" value="ECO:0000314"/>
    <property type="project" value="UniProtKB"/>
</dbReference>
<dbReference type="GO" id="GO:0070534">
    <property type="term" value="P:protein K63-linked ubiquitination"/>
    <property type="evidence" value="ECO:0000250"/>
    <property type="project" value="UniProtKB"/>
</dbReference>
<dbReference type="GO" id="GO:0010468">
    <property type="term" value="P:regulation of gene expression"/>
    <property type="evidence" value="ECO:0000318"/>
    <property type="project" value="GO_Central"/>
</dbReference>
<dbReference type="GO" id="GO:0031664">
    <property type="term" value="P:regulation of lipopolysaccharide-mediated signaling pathway"/>
    <property type="evidence" value="ECO:0000250"/>
    <property type="project" value="UniProtKB"/>
</dbReference>
<dbReference type="GO" id="GO:0032880">
    <property type="term" value="P:regulation of protein localization"/>
    <property type="evidence" value="ECO:0000315"/>
    <property type="project" value="UniProtKB"/>
</dbReference>
<dbReference type="GO" id="GO:0046596">
    <property type="term" value="P:regulation of viral entry into host cell"/>
    <property type="evidence" value="ECO:0000318"/>
    <property type="project" value="GO_Central"/>
</dbReference>
<dbReference type="GO" id="GO:0044790">
    <property type="term" value="P:suppression of viral release by host"/>
    <property type="evidence" value="ECO:0000314"/>
    <property type="project" value="UniProtKB"/>
</dbReference>
<dbReference type="CDD" id="cd19761">
    <property type="entry name" value="Bbox2_TRIM5-like"/>
    <property type="match status" value="1"/>
</dbReference>
<dbReference type="CDD" id="cd16591">
    <property type="entry name" value="RING-HC_TRIM5-like_C-IV"/>
    <property type="match status" value="1"/>
</dbReference>
<dbReference type="CDD" id="cd15822">
    <property type="entry name" value="SPRY_PRY_TRIM5"/>
    <property type="match status" value="1"/>
</dbReference>
<dbReference type="FunFam" id="2.60.120.920:FF:000023">
    <property type="entry name" value="Tripartite motif-containing 5 (Predicted)"/>
    <property type="match status" value="1"/>
</dbReference>
<dbReference type="FunFam" id="3.30.160.60:FF:000386">
    <property type="entry name" value="Tripartite motif-containing 5 (Predicted)"/>
    <property type="match status" value="1"/>
</dbReference>
<dbReference type="FunFam" id="3.30.40.10:FF:000144">
    <property type="entry name" value="Tripartite motif-containing 5 (Predicted)"/>
    <property type="match status" value="1"/>
</dbReference>
<dbReference type="Gene3D" id="2.60.120.920">
    <property type="match status" value="1"/>
</dbReference>
<dbReference type="Gene3D" id="3.30.160.60">
    <property type="entry name" value="Classic Zinc Finger"/>
    <property type="match status" value="1"/>
</dbReference>
<dbReference type="Gene3D" id="3.30.40.10">
    <property type="entry name" value="Zinc/RING finger domain, C3HC4 (zinc finger)"/>
    <property type="match status" value="1"/>
</dbReference>
<dbReference type="InterPro" id="IPR001870">
    <property type="entry name" value="B30.2/SPRY"/>
</dbReference>
<dbReference type="InterPro" id="IPR043136">
    <property type="entry name" value="B30.2/SPRY_sf"/>
</dbReference>
<dbReference type="InterPro" id="IPR003879">
    <property type="entry name" value="Butyrophylin_SPRY"/>
</dbReference>
<dbReference type="InterPro" id="IPR013320">
    <property type="entry name" value="ConA-like_dom_sf"/>
</dbReference>
<dbReference type="InterPro" id="IPR003877">
    <property type="entry name" value="SPRY_dom"/>
</dbReference>
<dbReference type="InterPro" id="IPR050143">
    <property type="entry name" value="TRIM/RBCC"/>
</dbReference>
<dbReference type="InterPro" id="IPR027370">
    <property type="entry name" value="Znf-RING_euk"/>
</dbReference>
<dbReference type="InterPro" id="IPR000315">
    <property type="entry name" value="Znf_B-box"/>
</dbReference>
<dbReference type="InterPro" id="IPR001841">
    <property type="entry name" value="Znf_RING"/>
</dbReference>
<dbReference type="InterPro" id="IPR013083">
    <property type="entry name" value="Znf_RING/FYVE/PHD"/>
</dbReference>
<dbReference type="InterPro" id="IPR017907">
    <property type="entry name" value="Znf_RING_CS"/>
</dbReference>
<dbReference type="PANTHER" id="PTHR24103">
    <property type="entry name" value="E3 UBIQUITIN-PROTEIN LIGASE TRIM"/>
    <property type="match status" value="1"/>
</dbReference>
<dbReference type="Pfam" id="PF00622">
    <property type="entry name" value="SPRY"/>
    <property type="match status" value="1"/>
</dbReference>
<dbReference type="Pfam" id="PF00643">
    <property type="entry name" value="zf-B_box"/>
    <property type="match status" value="1"/>
</dbReference>
<dbReference type="Pfam" id="PF13445">
    <property type="entry name" value="zf-RING_UBOX"/>
    <property type="match status" value="1"/>
</dbReference>
<dbReference type="PRINTS" id="PR01407">
    <property type="entry name" value="BUTYPHLNCDUF"/>
</dbReference>
<dbReference type="SMART" id="SM00336">
    <property type="entry name" value="BBOX"/>
    <property type="match status" value="1"/>
</dbReference>
<dbReference type="SMART" id="SM00184">
    <property type="entry name" value="RING"/>
    <property type="match status" value="1"/>
</dbReference>
<dbReference type="SMART" id="SM00449">
    <property type="entry name" value="SPRY"/>
    <property type="match status" value="1"/>
</dbReference>
<dbReference type="SUPFAM" id="SSF57845">
    <property type="entry name" value="B-box zinc-binding domain"/>
    <property type="match status" value="1"/>
</dbReference>
<dbReference type="SUPFAM" id="SSF49899">
    <property type="entry name" value="Concanavalin A-like lectins/glucanases"/>
    <property type="match status" value="1"/>
</dbReference>
<dbReference type="SUPFAM" id="SSF57850">
    <property type="entry name" value="RING/U-box"/>
    <property type="match status" value="1"/>
</dbReference>
<dbReference type="PROSITE" id="PS50188">
    <property type="entry name" value="B302_SPRY"/>
    <property type="match status" value="1"/>
</dbReference>
<dbReference type="PROSITE" id="PS50119">
    <property type="entry name" value="ZF_BBOX"/>
    <property type="match status" value="1"/>
</dbReference>
<dbReference type="PROSITE" id="PS00518">
    <property type="entry name" value="ZF_RING_1"/>
    <property type="match status" value="1"/>
</dbReference>
<dbReference type="PROSITE" id="PS50089">
    <property type="entry name" value="ZF_RING_2"/>
    <property type="match status" value="1"/>
</dbReference>
<keyword id="KW-0002">3D-structure</keyword>
<keyword id="KW-0007">Acetylation</keyword>
<keyword id="KW-0025">Alternative splicing</keyword>
<keyword id="KW-0051">Antiviral defense</keyword>
<keyword id="KW-0072">Autophagy</keyword>
<keyword id="KW-0175">Coiled coil</keyword>
<keyword id="KW-0963">Cytoplasm</keyword>
<keyword id="KW-0391">Immunity</keyword>
<keyword id="KW-0399">Innate immunity</keyword>
<keyword id="KW-0479">Metal-binding</keyword>
<keyword id="KW-0539">Nucleus</keyword>
<keyword id="KW-0597">Phosphoprotein</keyword>
<keyword id="KW-1185">Reference proteome</keyword>
<keyword id="KW-0808">Transferase</keyword>
<keyword id="KW-0832">Ubl conjugation</keyword>
<keyword id="KW-0833">Ubl conjugation pathway</keyword>
<keyword id="KW-0862">Zinc</keyword>
<keyword id="KW-0863">Zinc-finger</keyword>
<gene>
    <name type="primary">TRIM5</name>
</gene>